<dbReference type="EC" id="3.5.1.108" evidence="1"/>
<dbReference type="EMBL" id="CP001635">
    <property type="protein sequence ID" value="ACS17576.1"/>
    <property type="molecule type" value="Genomic_DNA"/>
</dbReference>
<dbReference type="SMR" id="C5CNG0"/>
<dbReference type="STRING" id="543728.Vapar_0925"/>
<dbReference type="KEGG" id="vap:Vapar_0925"/>
<dbReference type="eggNOG" id="COG0774">
    <property type="taxonomic scope" value="Bacteria"/>
</dbReference>
<dbReference type="HOGENOM" id="CLU_046528_1_0_4"/>
<dbReference type="UniPathway" id="UPA00359">
    <property type="reaction ID" value="UER00478"/>
</dbReference>
<dbReference type="GO" id="GO:0016020">
    <property type="term" value="C:membrane"/>
    <property type="evidence" value="ECO:0007669"/>
    <property type="project" value="GOC"/>
</dbReference>
<dbReference type="GO" id="GO:0046872">
    <property type="term" value="F:metal ion binding"/>
    <property type="evidence" value="ECO:0007669"/>
    <property type="project" value="UniProtKB-KW"/>
</dbReference>
<dbReference type="GO" id="GO:0103117">
    <property type="term" value="F:UDP-3-O-acyl-N-acetylglucosamine deacetylase activity"/>
    <property type="evidence" value="ECO:0007669"/>
    <property type="project" value="UniProtKB-UniRule"/>
</dbReference>
<dbReference type="GO" id="GO:0009245">
    <property type="term" value="P:lipid A biosynthetic process"/>
    <property type="evidence" value="ECO:0007669"/>
    <property type="project" value="UniProtKB-UniRule"/>
</dbReference>
<dbReference type="Gene3D" id="3.30.230.20">
    <property type="entry name" value="lpxc deacetylase, domain 1"/>
    <property type="match status" value="1"/>
</dbReference>
<dbReference type="Gene3D" id="3.30.1700.10">
    <property type="entry name" value="lpxc deacetylase, domain 2"/>
    <property type="match status" value="1"/>
</dbReference>
<dbReference type="HAMAP" id="MF_00388">
    <property type="entry name" value="LpxC"/>
    <property type="match status" value="1"/>
</dbReference>
<dbReference type="InterPro" id="IPR020568">
    <property type="entry name" value="Ribosomal_Su5_D2-typ_SF"/>
</dbReference>
<dbReference type="InterPro" id="IPR004463">
    <property type="entry name" value="UDP-acyl_GlcNac_deAcase"/>
</dbReference>
<dbReference type="InterPro" id="IPR011334">
    <property type="entry name" value="UDP-acyl_GlcNac_deAcase_C"/>
</dbReference>
<dbReference type="InterPro" id="IPR015870">
    <property type="entry name" value="UDP-acyl_N-AcGlcN_deAcase_N"/>
</dbReference>
<dbReference type="NCBIfam" id="TIGR00325">
    <property type="entry name" value="lpxC"/>
    <property type="match status" value="1"/>
</dbReference>
<dbReference type="PANTHER" id="PTHR33694">
    <property type="entry name" value="UDP-3-O-ACYL-N-ACETYLGLUCOSAMINE DEACETYLASE 1, MITOCHONDRIAL-RELATED"/>
    <property type="match status" value="1"/>
</dbReference>
<dbReference type="PANTHER" id="PTHR33694:SF1">
    <property type="entry name" value="UDP-3-O-ACYL-N-ACETYLGLUCOSAMINE DEACETYLASE 1, MITOCHONDRIAL-RELATED"/>
    <property type="match status" value="1"/>
</dbReference>
<dbReference type="Pfam" id="PF03331">
    <property type="entry name" value="LpxC"/>
    <property type="match status" value="1"/>
</dbReference>
<dbReference type="SUPFAM" id="SSF54211">
    <property type="entry name" value="Ribosomal protein S5 domain 2-like"/>
    <property type="match status" value="2"/>
</dbReference>
<name>LPXC_VARPS</name>
<reference key="1">
    <citation type="journal article" date="2011" name="J. Bacteriol.">
        <title>Complete genome sequence of the metabolically versatile plant growth-promoting endophyte, Variovorax paradoxus S110.</title>
        <authorList>
            <person name="Han J.I."/>
            <person name="Choi H.K."/>
            <person name="Lee S.W."/>
            <person name="Orwin P.M."/>
            <person name="Kim J."/>
            <person name="Laroe S.L."/>
            <person name="Kim T.G."/>
            <person name="O'Neil J."/>
            <person name="Leadbetter J.R."/>
            <person name="Lee S.Y."/>
            <person name="Hur C.G."/>
            <person name="Spain J.C."/>
            <person name="Ovchinnikova G."/>
            <person name="Goodwin L."/>
            <person name="Han C."/>
        </authorList>
    </citation>
    <scope>NUCLEOTIDE SEQUENCE [LARGE SCALE GENOMIC DNA]</scope>
    <source>
        <strain>S110</strain>
    </source>
</reference>
<feature type="chain" id="PRO_1000205811" description="UDP-3-O-acyl-N-acetylglucosamine deacetylase">
    <location>
        <begin position="1"/>
        <end position="307"/>
    </location>
</feature>
<feature type="active site" description="Proton donor" evidence="1">
    <location>
        <position position="268"/>
    </location>
</feature>
<feature type="binding site" evidence="1">
    <location>
        <position position="78"/>
    </location>
    <ligand>
        <name>Zn(2+)</name>
        <dbReference type="ChEBI" id="CHEBI:29105"/>
    </ligand>
</feature>
<feature type="binding site" evidence="1">
    <location>
        <position position="241"/>
    </location>
    <ligand>
        <name>Zn(2+)</name>
        <dbReference type="ChEBI" id="CHEBI:29105"/>
    </ligand>
</feature>
<feature type="binding site" evidence="1">
    <location>
        <position position="245"/>
    </location>
    <ligand>
        <name>Zn(2+)</name>
        <dbReference type="ChEBI" id="CHEBI:29105"/>
    </ligand>
</feature>
<proteinExistence type="inferred from homology"/>
<keyword id="KW-0378">Hydrolase</keyword>
<keyword id="KW-0441">Lipid A biosynthesis</keyword>
<keyword id="KW-0444">Lipid biosynthesis</keyword>
<keyword id="KW-0443">Lipid metabolism</keyword>
<keyword id="KW-0479">Metal-binding</keyword>
<keyword id="KW-0862">Zinc</keyword>
<gene>
    <name evidence="1" type="primary">lpxC</name>
    <name type="ordered locus">Vapar_0925</name>
</gene>
<sequence length="307" mass="33907">MLQQRTLKSISRAVGVGLHSGQRVELTLRPAPVDTGIVFRRVDLPEPVDIRMTAEAVTDTRLASTVSTGGAKVQTVEHLMSACAGLGIDNLYIDITADEVPILDGSASSFVFLLQSAGIELQKAPRRFIRVTRKVEVREGEGANEKWASLEPYHGYKLSFEIDFDHRVVNSTGQRVEFDLGTDSYSRDIARARTFGFTKEVEYMRSKGLALGGGLDNAIVMDDTKVLNAGGLRYDDEFVKHKILDAMGDLYIIGKPLLAAYTAFRSGHALNNKLLRELLAHSDAYEVVTFEDEKRAPRGFGEVARAW</sequence>
<comment type="function">
    <text evidence="1">Catalyzes the hydrolysis of UDP-3-O-myristoyl-N-acetylglucosamine to form UDP-3-O-myristoylglucosamine and acetate, the committed step in lipid A biosynthesis.</text>
</comment>
<comment type="catalytic activity">
    <reaction evidence="1">
        <text>a UDP-3-O-[(3R)-3-hydroxyacyl]-N-acetyl-alpha-D-glucosamine + H2O = a UDP-3-O-[(3R)-3-hydroxyacyl]-alpha-D-glucosamine + acetate</text>
        <dbReference type="Rhea" id="RHEA:67816"/>
        <dbReference type="ChEBI" id="CHEBI:15377"/>
        <dbReference type="ChEBI" id="CHEBI:30089"/>
        <dbReference type="ChEBI" id="CHEBI:137740"/>
        <dbReference type="ChEBI" id="CHEBI:173225"/>
        <dbReference type="EC" id="3.5.1.108"/>
    </reaction>
</comment>
<comment type="cofactor">
    <cofactor evidence="1">
        <name>Zn(2+)</name>
        <dbReference type="ChEBI" id="CHEBI:29105"/>
    </cofactor>
</comment>
<comment type="pathway">
    <text evidence="1">Glycolipid biosynthesis; lipid IV(A) biosynthesis; lipid IV(A) from (3R)-3-hydroxytetradecanoyl-[acyl-carrier-protein] and UDP-N-acetyl-alpha-D-glucosamine: step 2/6.</text>
</comment>
<comment type="similarity">
    <text evidence="1">Belongs to the LpxC family.</text>
</comment>
<evidence type="ECO:0000255" key="1">
    <source>
        <dbReference type="HAMAP-Rule" id="MF_00388"/>
    </source>
</evidence>
<protein>
    <recommendedName>
        <fullName evidence="1">UDP-3-O-acyl-N-acetylglucosamine deacetylase</fullName>
        <shortName evidence="1">UDP-3-O-acyl-GlcNAc deacetylase</shortName>
        <ecNumber evidence="1">3.5.1.108</ecNumber>
    </recommendedName>
    <alternativeName>
        <fullName evidence="1">UDP-3-O-[R-3-hydroxymyristoyl]-N-acetylglucosamine deacetylase</fullName>
    </alternativeName>
</protein>
<organism>
    <name type="scientific">Variovorax paradoxus (strain S110)</name>
    <dbReference type="NCBI Taxonomy" id="543728"/>
    <lineage>
        <taxon>Bacteria</taxon>
        <taxon>Pseudomonadati</taxon>
        <taxon>Pseudomonadota</taxon>
        <taxon>Betaproteobacteria</taxon>
        <taxon>Burkholderiales</taxon>
        <taxon>Comamonadaceae</taxon>
        <taxon>Variovorax</taxon>
    </lineage>
</organism>
<accession>C5CNG0</accession>